<reference key="1">
    <citation type="journal article" date="1998" name="Nature">
        <title>Analysis of 1.9 Mb of contiguous sequence from chromosome 4 of Arabidopsis thaliana.</title>
        <authorList>
            <person name="Bevan M."/>
            <person name="Bancroft I."/>
            <person name="Bent E."/>
            <person name="Love K."/>
            <person name="Goodman H.M."/>
            <person name="Dean C."/>
            <person name="Bergkamp R."/>
            <person name="Dirkse W."/>
            <person name="van Staveren M."/>
            <person name="Stiekema W."/>
            <person name="Drost L."/>
            <person name="Ridley P."/>
            <person name="Hudson S.-A."/>
            <person name="Patel K."/>
            <person name="Murphy G."/>
            <person name="Piffanelli P."/>
            <person name="Wedler H."/>
            <person name="Wedler E."/>
            <person name="Wambutt R."/>
            <person name="Weitzenegger T."/>
            <person name="Pohl T."/>
            <person name="Terryn N."/>
            <person name="Gielen J."/>
            <person name="Villarroel R."/>
            <person name="De Clercq R."/>
            <person name="van Montagu M."/>
            <person name="Lecharny A."/>
            <person name="Aubourg S."/>
            <person name="Gy I."/>
            <person name="Kreis M."/>
            <person name="Lao N."/>
            <person name="Kavanagh T."/>
            <person name="Hempel S."/>
            <person name="Kotter P."/>
            <person name="Entian K.-D."/>
            <person name="Rieger M."/>
            <person name="Schaefer M."/>
            <person name="Funk B."/>
            <person name="Mueller-Auer S."/>
            <person name="Silvey M."/>
            <person name="James R."/>
            <person name="Monfort A."/>
            <person name="Pons A."/>
            <person name="Puigdomenech P."/>
            <person name="Douka A."/>
            <person name="Voukelatou E."/>
            <person name="Milioni D."/>
            <person name="Hatzopoulos P."/>
            <person name="Piravandi E."/>
            <person name="Obermaier B."/>
            <person name="Hilbert H."/>
            <person name="Duesterhoeft A."/>
            <person name="Moores T."/>
            <person name="Jones J.D.G."/>
            <person name="Eneva T."/>
            <person name="Palme K."/>
            <person name="Benes V."/>
            <person name="Rechmann S."/>
            <person name="Ansorge W."/>
            <person name="Cooke R."/>
            <person name="Berger C."/>
            <person name="Delseny M."/>
            <person name="Voet M."/>
            <person name="Volckaert G."/>
            <person name="Mewes H.-W."/>
            <person name="Klosterman S."/>
            <person name="Schueller C."/>
            <person name="Chalwatzis N."/>
        </authorList>
    </citation>
    <scope>NUCLEOTIDE SEQUENCE [LARGE SCALE GENOMIC DNA]</scope>
    <source>
        <strain>cv. Columbia</strain>
    </source>
</reference>
<reference key="2">
    <citation type="journal article" date="1999" name="Nature">
        <title>Sequence and analysis of chromosome 4 of the plant Arabidopsis thaliana.</title>
        <authorList>
            <person name="Mayer K.F.X."/>
            <person name="Schueller C."/>
            <person name="Wambutt R."/>
            <person name="Murphy G."/>
            <person name="Volckaert G."/>
            <person name="Pohl T."/>
            <person name="Duesterhoeft A."/>
            <person name="Stiekema W."/>
            <person name="Entian K.-D."/>
            <person name="Terryn N."/>
            <person name="Harris B."/>
            <person name="Ansorge W."/>
            <person name="Brandt P."/>
            <person name="Grivell L.A."/>
            <person name="Rieger M."/>
            <person name="Weichselgartner M."/>
            <person name="de Simone V."/>
            <person name="Obermaier B."/>
            <person name="Mache R."/>
            <person name="Mueller M."/>
            <person name="Kreis M."/>
            <person name="Delseny M."/>
            <person name="Puigdomenech P."/>
            <person name="Watson M."/>
            <person name="Schmidtheini T."/>
            <person name="Reichert B."/>
            <person name="Portetelle D."/>
            <person name="Perez-Alonso M."/>
            <person name="Boutry M."/>
            <person name="Bancroft I."/>
            <person name="Vos P."/>
            <person name="Hoheisel J."/>
            <person name="Zimmermann W."/>
            <person name="Wedler H."/>
            <person name="Ridley P."/>
            <person name="Langham S.-A."/>
            <person name="McCullagh B."/>
            <person name="Bilham L."/>
            <person name="Robben J."/>
            <person name="van der Schueren J."/>
            <person name="Grymonprez B."/>
            <person name="Chuang Y.-J."/>
            <person name="Vandenbussche F."/>
            <person name="Braeken M."/>
            <person name="Weltjens I."/>
            <person name="Voet M."/>
            <person name="Bastiaens I."/>
            <person name="Aert R."/>
            <person name="Defoor E."/>
            <person name="Weitzenegger T."/>
            <person name="Bothe G."/>
            <person name="Ramsperger U."/>
            <person name="Hilbert H."/>
            <person name="Braun M."/>
            <person name="Holzer E."/>
            <person name="Brandt A."/>
            <person name="Peters S."/>
            <person name="van Staveren M."/>
            <person name="Dirkse W."/>
            <person name="Mooijman P."/>
            <person name="Klein Lankhorst R."/>
            <person name="Rose M."/>
            <person name="Hauf J."/>
            <person name="Koetter P."/>
            <person name="Berneiser S."/>
            <person name="Hempel S."/>
            <person name="Feldpausch M."/>
            <person name="Lamberth S."/>
            <person name="Van den Daele H."/>
            <person name="De Keyser A."/>
            <person name="Buysshaert C."/>
            <person name="Gielen J."/>
            <person name="Villarroel R."/>
            <person name="De Clercq R."/>
            <person name="van Montagu M."/>
            <person name="Rogers J."/>
            <person name="Cronin A."/>
            <person name="Quail M.A."/>
            <person name="Bray-Allen S."/>
            <person name="Clark L."/>
            <person name="Doggett J."/>
            <person name="Hall S."/>
            <person name="Kay M."/>
            <person name="Lennard N."/>
            <person name="McLay K."/>
            <person name="Mayes R."/>
            <person name="Pettett A."/>
            <person name="Rajandream M.A."/>
            <person name="Lyne M."/>
            <person name="Benes V."/>
            <person name="Rechmann S."/>
            <person name="Borkova D."/>
            <person name="Bloecker H."/>
            <person name="Scharfe M."/>
            <person name="Grimm M."/>
            <person name="Loehnert T.-H."/>
            <person name="Dose S."/>
            <person name="de Haan M."/>
            <person name="Maarse A.C."/>
            <person name="Schaefer M."/>
            <person name="Mueller-Auer S."/>
            <person name="Gabel C."/>
            <person name="Fuchs M."/>
            <person name="Fartmann B."/>
            <person name="Granderath K."/>
            <person name="Dauner D."/>
            <person name="Herzl A."/>
            <person name="Neumann S."/>
            <person name="Argiriou A."/>
            <person name="Vitale D."/>
            <person name="Liguori R."/>
            <person name="Piravandi E."/>
            <person name="Massenet O."/>
            <person name="Quigley F."/>
            <person name="Clabauld G."/>
            <person name="Muendlein A."/>
            <person name="Felber R."/>
            <person name="Schnabl S."/>
            <person name="Hiller R."/>
            <person name="Schmidt W."/>
            <person name="Lecharny A."/>
            <person name="Aubourg S."/>
            <person name="Chefdor F."/>
            <person name="Cooke R."/>
            <person name="Berger C."/>
            <person name="Monfort A."/>
            <person name="Casacuberta E."/>
            <person name="Gibbons T."/>
            <person name="Weber N."/>
            <person name="Vandenbol M."/>
            <person name="Bargues M."/>
            <person name="Terol J."/>
            <person name="Torres A."/>
            <person name="Perez-Perez A."/>
            <person name="Purnelle B."/>
            <person name="Bent E."/>
            <person name="Johnson S."/>
            <person name="Tacon D."/>
            <person name="Jesse T."/>
            <person name="Heijnen L."/>
            <person name="Schwarz S."/>
            <person name="Scholler P."/>
            <person name="Heber S."/>
            <person name="Francs P."/>
            <person name="Bielke C."/>
            <person name="Frishman D."/>
            <person name="Haase D."/>
            <person name="Lemcke K."/>
            <person name="Mewes H.-W."/>
            <person name="Stocker S."/>
            <person name="Zaccaria P."/>
            <person name="Bevan M."/>
            <person name="Wilson R.K."/>
            <person name="de la Bastide M."/>
            <person name="Habermann K."/>
            <person name="Parnell L."/>
            <person name="Dedhia N."/>
            <person name="Gnoj L."/>
            <person name="Schutz K."/>
            <person name="Huang E."/>
            <person name="Spiegel L."/>
            <person name="Sekhon M."/>
            <person name="Murray J."/>
            <person name="Sheet P."/>
            <person name="Cordes M."/>
            <person name="Abu-Threideh J."/>
            <person name="Stoneking T."/>
            <person name="Kalicki J."/>
            <person name="Graves T."/>
            <person name="Harmon G."/>
            <person name="Edwards J."/>
            <person name="Latreille P."/>
            <person name="Courtney L."/>
            <person name="Cloud J."/>
            <person name="Abbott A."/>
            <person name="Scott K."/>
            <person name="Johnson D."/>
            <person name="Minx P."/>
            <person name="Bentley D."/>
            <person name="Fulton B."/>
            <person name="Miller N."/>
            <person name="Greco T."/>
            <person name="Kemp K."/>
            <person name="Kramer J."/>
            <person name="Fulton L."/>
            <person name="Mardis E."/>
            <person name="Dante M."/>
            <person name="Pepin K."/>
            <person name="Hillier L.W."/>
            <person name="Nelson J."/>
            <person name="Spieth J."/>
            <person name="Ryan E."/>
            <person name="Andrews S."/>
            <person name="Geisel C."/>
            <person name="Layman D."/>
            <person name="Du H."/>
            <person name="Ali J."/>
            <person name="Berghoff A."/>
            <person name="Jones K."/>
            <person name="Drone K."/>
            <person name="Cotton M."/>
            <person name="Joshu C."/>
            <person name="Antonoiu B."/>
            <person name="Zidanic M."/>
            <person name="Strong C."/>
            <person name="Sun H."/>
            <person name="Lamar B."/>
            <person name="Yordan C."/>
            <person name="Ma P."/>
            <person name="Zhong J."/>
            <person name="Preston R."/>
            <person name="Vil D."/>
            <person name="Shekher M."/>
            <person name="Matero A."/>
            <person name="Shah R."/>
            <person name="Swaby I.K."/>
            <person name="O'Shaughnessy A."/>
            <person name="Rodriguez M."/>
            <person name="Hoffman J."/>
            <person name="Till S."/>
            <person name="Granat S."/>
            <person name="Shohdy N."/>
            <person name="Hasegawa A."/>
            <person name="Hameed A."/>
            <person name="Lodhi M."/>
            <person name="Johnson A."/>
            <person name="Chen E."/>
            <person name="Marra M.A."/>
            <person name="Martienssen R."/>
            <person name="McCombie W.R."/>
        </authorList>
    </citation>
    <scope>NUCLEOTIDE SEQUENCE [LARGE SCALE GENOMIC DNA]</scope>
    <source>
        <strain>cv. Columbia</strain>
    </source>
</reference>
<reference key="3">
    <citation type="journal article" date="2017" name="Plant J.">
        <title>Araport11: a complete reannotation of the Arabidopsis thaliana reference genome.</title>
        <authorList>
            <person name="Cheng C.Y."/>
            <person name="Krishnakumar V."/>
            <person name="Chan A.P."/>
            <person name="Thibaud-Nissen F."/>
            <person name="Schobel S."/>
            <person name="Town C.D."/>
        </authorList>
    </citation>
    <scope>GENOME REANNOTATION</scope>
    <source>
        <strain>cv. Columbia</strain>
    </source>
</reference>
<reference key="4">
    <citation type="journal article" date="2003" name="Science">
        <title>Empirical analysis of transcriptional activity in the Arabidopsis genome.</title>
        <authorList>
            <person name="Yamada K."/>
            <person name="Lim J."/>
            <person name="Dale J.M."/>
            <person name="Chen H."/>
            <person name="Shinn P."/>
            <person name="Palm C.J."/>
            <person name="Southwick A.M."/>
            <person name="Wu H.C."/>
            <person name="Kim C.J."/>
            <person name="Nguyen M."/>
            <person name="Pham P.K."/>
            <person name="Cheuk R.F."/>
            <person name="Karlin-Newmann G."/>
            <person name="Liu S.X."/>
            <person name="Lam B."/>
            <person name="Sakano H."/>
            <person name="Wu T."/>
            <person name="Yu G."/>
            <person name="Miranda M."/>
            <person name="Quach H.L."/>
            <person name="Tripp M."/>
            <person name="Chang C.H."/>
            <person name="Lee J.M."/>
            <person name="Toriumi M.J."/>
            <person name="Chan M.M."/>
            <person name="Tang C.C."/>
            <person name="Onodera C.S."/>
            <person name="Deng J.M."/>
            <person name="Akiyama K."/>
            <person name="Ansari Y."/>
            <person name="Arakawa T."/>
            <person name="Banh J."/>
            <person name="Banno F."/>
            <person name="Bowser L."/>
            <person name="Brooks S.Y."/>
            <person name="Carninci P."/>
            <person name="Chao Q."/>
            <person name="Choy N."/>
            <person name="Enju A."/>
            <person name="Goldsmith A.D."/>
            <person name="Gurjal M."/>
            <person name="Hansen N.F."/>
            <person name="Hayashizaki Y."/>
            <person name="Johnson-Hopson C."/>
            <person name="Hsuan V.W."/>
            <person name="Iida K."/>
            <person name="Karnes M."/>
            <person name="Khan S."/>
            <person name="Koesema E."/>
            <person name="Ishida J."/>
            <person name="Jiang P.X."/>
            <person name="Jones T."/>
            <person name="Kawai J."/>
            <person name="Kamiya A."/>
            <person name="Meyers C."/>
            <person name="Nakajima M."/>
            <person name="Narusaka M."/>
            <person name="Seki M."/>
            <person name="Sakurai T."/>
            <person name="Satou M."/>
            <person name="Tamse R."/>
            <person name="Vaysberg M."/>
            <person name="Wallender E.K."/>
            <person name="Wong C."/>
            <person name="Yamamura Y."/>
            <person name="Yuan S."/>
            <person name="Shinozaki K."/>
            <person name="Davis R.W."/>
            <person name="Theologis A."/>
            <person name="Ecker J.R."/>
        </authorList>
    </citation>
    <scope>NUCLEOTIDE SEQUENCE [LARGE SCALE MRNA]</scope>
    <source>
        <strain>cv. Columbia</strain>
    </source>
</reference>
<reference key="5">
    <citation type="submission" date="2002-03" db="EMBL/GenBank/DDBJ databases">
        <title>Full-length cDNA from Arabidopsis thaliana.</title>
        <authorList>
            <person name="Brover V.V."/>
            <person name="Troukhan M.E."/>
            <person name="Alexandrov N.A."/>
            <person name="Lu Y.-P."/>
            <person name="Flavell R.B."/>
            <person name="Feldmann K.A."/>
        </authorList>
    </citation>
    <scope>NUCLEOTIDE SEQUENCE [LARGE SCALE MRNA]</scope>
</reference>
<reference key="6">
    <citation type="submission" date="2005-01" db="EMBL/GenBank/DDBJ databases">
        <title>Arabidopsis ORF clones.</title>
        <authorList>
            <person name="Cheuk R.F."/>
            <person name="Chen H."/>
            <person name="Kim C.J."/>
            <person name="Shinn P."/>
            <person name="Ecker J.R."/>
        </authorList>
    </citation>
    <scope>NUCLEOTIDE SEQUENCE [LARGE SCALE MRNA]</scope>
    <source>
        <strain>cv. Columbia</strain>
    </source>
</reference>
<dbReference type="EC" id="1.13.11.54" evidence="1"/>
<dbReference type="EC" id="1.13.11.53" evidence="1"/>
<dbReference type="EMBL" id="Z97336">
    <property type="protein sequence ID" value="CAB10250.1"/>
    <property type="status" value="ALT_SEQ"/>
    <property type="molecule type" value="Genomic_DNA"/>
</dbReference>
<dbReference type="EMBL" id="AL161539">
    <property type="protein sequence ID" value="CAB78513.1"/>
    <property type="status" value="ALT_SEQ"/>
    <property type="molecule type" value="Genomic_DNA"/>
</dbReference>
<dbReference type="EMBL" id="CP002687">
    <property type="protein sequence ID" value="AEE83479.1"/>
    <property type="molecule type" value="Genomic_DNA"/>
</dbReference>
<dbReference type="EMBL" id="CP002687">
    <property type="protein sequence ID" value="AEE83480.1"/>
    <property type="molecule type" value="Genomic_DNA"/>
</dbReference>
<dbReference type="EMBL" id="AF462818">
    <property type="protein sequence ID" value="AAL58908.1"/>
    <property type="molecule type" value="mRNA"/>
</dbReference>
<dbReference type="EMBL" id="AY086754">
    <property type="protein sequence ID" value="AAM63805.1"/>
    <property type="molecule type" value="mRNA"/>
</dbReference>
<dbReference type="EMBL" id="BT020561">
    <property type="protein sequence ID" value="AAW70407.1"/>
    <property type="molecule type" value="mRNA"/>
</dbReference>
<dbReference type="PIR" id="H71409">
    <property type="entry name" value="H71409"/>
</dbReference>
<dbReference type="RefSeq" id="NP_001031640.2">
    <molecule id="Q8W108-1"/>
    <property type="nucleotide sequence ID" value="NM_001036563.5"/>
</dbReference>
<dbReference type="RefSeq" id="NP_567441.1">
    <molecule id="Q8W108-1"/>
    <property type="nucleotide sequence ID" value="NM_117554.7"/>
</dbReference>
<dbReference type="SMR" id="Q8W108"/>
<dbReference type="BioGRID" id="12419">
    <property type="interactions" value="4"/>
</dbReference>
<dbReference type="FunCoup" id="Q8W108">
    <property type="interactions" value="2972"/>
</dbReference>
<dbReference type="IntAct" id="Q8W108">
    <property type="interactions" value="2"/>
</dbReference>
<dbReference type="STRING" id="3702.Q8W108"/>
<dbReference type="iPTMnet" id="Q8W108"/>
<dbReference type="PaxDb" id="3702-AT4G14710.5"/>
<dbReference type="EnsemblPlants" id="AT4G14710.1">
    <molecule id="Q8W108-1"/>
    <property type="protein sequence ID" value="AT4G14710.1"/>
    <property type="gene ID" value="AT4G14710"/>
</dbReference>
<dbReference type="EnsemblPlants" id="AT4G14710.2">
    <molecule id="Q8W108-1"/>
    <property type="protein sequence ID" value="AT4G14710.2"/>
    <property type="gene ID" value="AT4G14710"/>
</dbReference>
<dbReference type="GeneID" id="827122"/>
<dbReference type="Gramene" id="AT4G14710.1">
    <molecule id="Q8W108-1"/>
    <property type="protein sequence ID" value="AT4G14710.1"/>
    <property type="gene ID" value="AT4G14710"/>
</dbReference>
<dbReference type="Gramene" id="AT4G14710.2">
    <molecule id="Q8W108-1"/>
    <property type="protein sequence ID" value="AT4G14710.2"/>
    <property type="gene ID" value="AT4G14710"/>
</dbReference>
<dbReference type="KEGG" id="ath:AT4G14710"/>
<dbReference type="Araport" id="AT4G14710"/>
<dbReference type="TAIR" id="AT4G14710">
    <property type="gene designation" value="ATARD2"/>
</dbReference>
<dbReference type="eggNOG" id="KOG2107">
    <property type="taxonomic scope" value="Eukaryota"/>
</dbReference>
<dbReference type="InParanoid" id="Q8W108"/>
<dbReference type="PhylomeDB" id="Q8W108"/>
<dbReference type="BioCyc" id="ARA:AT4G14710-MONOMER"/>
<dbReference type="UniPathway" id="UPA00904">
    <property type="reaction ID" value="UER00878"/>
</dbReference>
<dbReference type="PRO" id="PR:Q8W108"/>
<dbReference type="Proteomes" id="UP000006548">
    <property type="component" value="Chromosome 4"/>
</dbReference>
<dbReference type="ExpressionAtlas" id="Q8W108">
    <property type="expression patterns" value="baseline and differential"/>
</dbReference>
<dbReference type="GO" id="GO:0005737">
    <property type="term" value="C:cytoplasm"/>
    <property type="evidence" value="ECO:0007669"/>
    <property type="project" value="UniProtKB-SubCell"/>
</dbReference>
<dbReference type="GO" id="GO:0005634">
    <property type="term" value="C:nucleus"/>
    <property type="evidence" value="ECO:0007669"/>
    <property type="project" value="UniProtKB-SubCell"/>
</dbReference>
<dbReference type="GO" id="GO:0010308">
    <property type="term" value="F:acireductone dioxygenase (Ni2+-requiring) activity"/>
    <property type="evidence" value="ECO:0007669"/>
    <property type="project" value="UniProtKB-UniRule"/>
</dbReference>
<dbReference type="GO" id="GO:0010309">
    <property type="term" value="F:acireductone dioxygenase [iron(II)-requiring] activity"/>
    <property type="evidence" value="ECO:0007669"/>
    <property type="project" value="UniProtKB-UniRule"/>
</dbReference>
<dbReference type="GO" id="GO:0005506">
    <property type="term" value="F:iron ion binding"/>
    <property type="evidence" value="ECO:0007669"/>
    <property type="project" value="UniProtKB-UniRule"/>
</dbReference>
<dbReference type="GO" id="GO:0016151">
    <property type="term" value="F:nickel cation binding"/>
    <property type="evidence" value="ECO:0007669"/>
    <property type="project" value="UniProtKB-UniRule"/>
</dbReference>
<dbReference type="GO" id="GO:0019509">
    <property type="term" value="P:L-methionine salvage from methylthioadenosine"/>
    <property type="evidence" value="ECO:0007669"/>
    <property type="project" value="UniProtKB-UniRule"/>
</dbReference>
<dbReference type="CDD" id="cd02232">
    <property type="entry name" value="cupin_ARD"/>
    <property type="match status" value="1"/>
</dbReference>
<dbReference type="FunFam" id="2.60.120.10:FF:000031">
    <property type="entry name" value="1,2-dihydroxy-3-keto-5-methylthiopentene dioxygenase"/>
    <property type="match status" value="1"/>
</dbReference>
<dbReference type="Gene3D" id="2.60.120.10">
    <property type="entry name" value="Jelly Rolls"/>
    <property type="match status" value="1"/>
</dbReference>
<dbReference type="HAMAP" id="MF_03154">
    <property type="entry name" value="Salvage_MtnD_euk"/>
    <property type="match status" value="1"/>
</dbReference>
<dbReference type="InterPro" id="IPR004313">
    <property type="entry name" value="ARD"/>
</dbReference>
<dbReference type="InterPro" id="IPR027496">
    <property type="entry name" value="ARD_euk"/>
</dbReference>
<dbReference type="InterPro" id="IPR014710">
    <property type="entry name" value="RmlC-like_jellyroll"/>
</dbReference>
<dbReference type="InterPro" id="IPR011051">
    <property type="entry name" value="RmlC_Cupin_sf"/>
</dbReference>
<dbReference type="PANTHER" id="PTHR23418">
    <property type="entry name" value="ACIREDUCTONE DIOXYGENASE"/>
    <property type="match status" value="1"/>
</dbReference>
<dbReference type="PANTHER" id="PTHR23418:SF0">
    <property type="entry name" value="ACIREDUCTONE DIOXYGENASE"/>
    <property type="match status" value="1"/>
</dbReference>
<dbReference type="Pfam" id="PF03079">
    <property type="entry name" value="ARD"/>
    <property type="match status" value="1"/>
</dbReference>
<dbReference type="SUPFAM" id="SSF51182">
    <property type="entry name" value="RmlC-like cupins"/>
    <property type="match status" value="1"/>
</dbReference>
<evidence type="ECO:0000255" key="1">
    <source>
        <dbReference type="HAMAP-Rule" id="MF_03154"/>
    </source>
</evidence>
<evidence type="ECO:0000305" key="2"/>
<gene>
    <name type="primary">ARD3</name>
    <name type="ordered locus">At4g14710</name>
    <name type="ORF">dl3395c</name>
    <name type="ORF">FCAALL.141</name>
</gene>
<proteinExistence type="evidence at protein level"/>
<name>MTND3_ARATH</name>
<keyword id="KW-0025">Alternative splicing</keyword>
<keyword id="KW-0028">Amino-acid biosynthesis</keyword>
<keyword id="KW-0963">Cytoplasm</keyword>
<keyword id="KW-0223">Dioxygenase</keyword>
<keyword id="KW-0408">Iron</keyword>
<keyword id="KW-0479">Metal-binding</keyword>
<keyword id="KW-0486">Methionine biosynthesis</keyword>
<keyword id="KW-0533">Nickel</keyword>
<keyword id="KW-0539">Nucleus</keyword>
<keyword id="KW-0560">Oxidoreductase</keyword>
<keyword id="KW-1185">Reference proteome</keyword>
<organism>
    <name type="scientific">Arabidopsis thaliana</name>
    <name type="common">Mouse-ear cress</name>
    <dbReference type="NCBI Taxonomy" id="3702"/>
    <lineage>
        <taxon>Eukaryota</taxon>
        <taxon>Viridiplantae</taxon>
        <taxon>Streptophyta</taxon>
        <taxon>Embryophyta</taxon>
        <taxon>Tracheophyta</taxon>
        <taxon>Spermatophyta</taxon>
        <taxon>Magnoliopsida</taxon>
        <taxon>eudicotyledons</taxon>
        <taxon>Gunneridae</taxon>
        <taxon>Pentapetalae</taxon>
        <taxon>rosids</taxon>
        <taxon>malvids</taxon>
        <taxon>Brassicales</taxon>
        <taxon>Brassicaceae</taxon>
        <taxon>Camelineae</taxon>
        <taxon>Arabidopsis</taxon>
    </lineage>
</organism>
<protein>
    <recommendedName>
        <fullName evidence="1">Acireductone dioxygenase 3</fullName>
    </recommendedName>
    <alternativeName>
        <fullName evidence="1">Acireductone dioxygenase (Fe(2+)-requiring) 3</fullName>
        <shortName evidence="1">ARD' 3</shortName>
        <shortName evidence="1">Fe-ARD 3</shortName>
        <ecNumber evidence="1">1.13.11.54</ecNumber>
    </alternativeName>
    <alternativeName>
        <fullName evidence="1">Acireductone dioxygenase (Ni(2+)-requiring) 3</fullName>
        <shortName evidence="1">ARD 3</shortName>
        <shortName evidence="1">Ni-ARD 3</shortName>
        <ecNumber evidence="1">1.13.11.53</ecNumber>
    </alternativeName>
</protein>
<accession>Q8W108</accession>
<accession>O23327</accession>
<accession>Q2V3I4</accession>
<feature type="chain" id="PRO_0000223194" description="Acireductone dioxygenase 3">
    <location>
        <begin position="1"/>
        <end position="199"/>
    </location>
</feature>
<feature type="binding site" evidence="1">
    <location>
        <position position="99"/>
    </location>
    <ligand>
        <name>Fe(2+)</name>
        <dbReference type="ChEBI" id="CHEBI:29033"/>
        <note>for iron-dependent acireductone dioxygenase activity</note>
    </ligand>
</feature>
<feature type="binding site" evidence="1">
    <location>
        <position position="99"/>
    </location>
    <ligand>
        <name>Ni(2+)</name>
        <dbReference type="ChEBI" id="CHEBI:49786"/>
        <note>for nickel-dependent acireductone dioxygenase activity</note>
    </ligand>
</feature>
<feature type="binding site" evidence="1">
    <location>
        <position position="101"/>
    </location>
    <ligand>
        <name>Fe(2+)</name>
        <dbReference type="ChEBI" id="CHEBI:29033"/>
        <note>for iron-dependent acireductone dioxygenase activity</note>
    </ligand>
</feature>
<feature type="binding site" evidence="1">
    <location>
        <position position="101"/>
    </location>
    <ligand>
        <name>Ni(2+)</name>
        <dbReference type="ChEBI" id="CHEBI:49786"/>
        <note>for nickel-dependent acireductone dioxygenase activity</note>
    </ligand>
</feature>
<feature type="binding site" evidence="1">
    <location>
        <position position="105"/>
    </location>
    <ligand>
        <name>Fe(2+)</name>
        <dbReference type="ChEBI" id="CHEBI:29033"/>
        <note>for iron-dependent acireductone dioxygenase activity</note>
    </ligand>
</feature>
<feature type="binding site" evidence="1">
    <location>
        <position position="105"/>
    </location>
    <ligand>
        <name>Ni(2+)</name>
        <dbReference type="ChEBI" id="CHEBI:49786"/>
        <note>for nickel-dependent acireductone dioxygenase activity</note>
    </ligand>
</feature>
<feature type="binding site" evidence="1">
    <location>
        <position position="144"/>
    </location>
    <ligand>
        <name>Fe(2+)</name>
        <dbReference type="ChEBI" id="CHEBI:29033"/>
        <note>for iron-dependent acireductone dioxygenase activity</note>
    </ligand>
</feature>
<feature type="binding site" evidence="1">
    <location>
        <position position="144"/>
    </location>
    <ligand>
        <name>Ni(2+)</name>
        <dbReference type="ChEBI" id="CHEBI:49786"/>
        <note>for nickel-dependent acireductone dioxygenase activity</note>
    </ligand>
</feature>
<comment type="function">
    <text evidence="1">Catalyzes 2 different reactions between oxygen and the acireductone 1,2-dihydroxy-3-keto-5-methylthiopentene (DHK-MTPene) depending upon the metal bound in the active site. Fe-containing acireductone dioxygenase (Fe-ARD) produces formate and 2-keto-4-methylthiobutyrate (KMTB), the alpha-ketoacid precursor of methionine in the methionine recycle pathway. Ni-containing acireductone dioxygenase (Ni-ARD) produces methylthiopropionate, carbon monoxide and formate, and does not lie on the methionine recycle pathway.</text>
</comment>
<comment type="catalytic activity">
    <reaction evidence="1">
        <text>1,2-dihydroxy-5-(methylsulfanyl)pent-1-en-3-one + O2 = 4-methylsulfanyl-2-oxobutanoate + formate + 2 H(+)</text>
        <dbReference type="Rhea" id="RHEA:24504"/>
        <dbReference type="ChEBI" id="CHEBI:15378"/>
        <dbReference type="ChEBI" id="CHEBI:15379"/>
        <dbReference type="ChEBI" id="CHEBI:15740"/>
        <dbReference type="ChEBI" id="CHEBI:16723"/>
        <dbReference type="ChEBI" id="CHEBI:49252"/>
        <dbReference type="EC" id="1.13.11.54"/>
    </reaction>
</comment>
<comment type="catalytic activity">
    <reaction evidence="1">
        <text>1,2-dihydroxy-5-(methylsulfanyl)pent-1-en-3-one + O2 = 3-(methylsulfanyl)propanoate + CO + formate + 2 H(+)</text>
        <dbReference type="Rhea" id="RHEA:14161"/>
        <dbReference type="ChEBI" id="CHEBI:15378"/>
        <dbReference type="ChEBI" id="CHEBI:15379"/>
        <dbReference type="ChEBI" id="CHEBI:15740"/>
        <dbReference type="ChEBI" id="CHEBI:17245"/>
        <dbReference type="ChEBI" id="CHEBI:49016"/>
        <dbReference type="ChEBI" id="CHEBI:49252"/>
        <dbReference type="EC" id="1.13.11.53"/>
    </reaction>
</comment>
<comment type="cofactor">
    <cofactor evidence="1">
        <name>Fe(2+)</name>
        <dbReference type="ChEBI" id="CHEBI:29033"/>
    </cofactor>
    <cofactor evidence="1">
        <name>Ni(2+)</name>
        <dbReference type="ChEBI" id="CHEBI:49786"/>
    </cofactor>
    <text evidence="1">Binds either 1 Fe or Ni cation per monomer. Iron-binding promotes an acireductone dioxygenase reaction producing 2-keto-4-methylthiobutyrate, while nickel-binding promotes an acireductone dioxygenase reaction producing 3-(methylsulfanyl)propanoate.</text>
</comment>
<comment type="pathway">
    <text evidence="1">Amino-acid biosynthesis; L-methionine biosynthesis via salvage pathway; L-methionine from S-methyl-5-thio-alpha-D-ribose 1-phosphate: step 5/6.</text>
</comment>
<comment type="interaction">
    <interactant intactId="EBI-4432270">
        <id>Q8W108</id>
    </interactant>
    <interactant intactId="EBI-25513590">
        <id>A0A178U6D3</id>
        <label>AXX17_At5g41910</label>
    </interactant>
    <organismsDiffer>false</organismsDiffer>
    <experiments>3</experiments>
</comment>
<comment type="subcellular location">
    <subcellularLocation>
        <location evidence="1">Cytoplasm</location>
    </subcellularLocation>
    <subcellularLocation>
        <location evidence="1">Nucleus</location>
    </subcellularLocation>
</comment>
<comment type="alternative products">
    <event type="alternative splicing"/>
    <isoform>
        <id>Q8W108-1</id>
        <name>1</name>
        <sequence type="displayed"/>
    </isoform>
    <text>A number of isoforms are produced. According to EST sequences.</text>
</comment>
<comment type="similarity">
    <text evidence="1">Belongs to the acireductone dioxygenase (ARD) family.</text>
</comment>
<comment type="sequence caution" evidence="2">
    <conflict type="erroneous gene model prediction">
        <sequence resource="EMBL-CDS" id="CAB10250"/>
    </conflict>
    <text>The predicted gene At4g14710 has been split into 2 genes: At4g14710 and At4g14716.</text>
</comment>
<comment type="sequence caution" evidence="2">
    <conflict type="erroneous gene model prediction">
        <sequence resource="EMBL-CDS" id="CAB78513"/>
    </conflict>
    <text>The predicted gene At4g14710 has been split into 2 genes: At4g14710 and At4g14716.</text>
</comment>
<sequence length="199" mass="23356">MGEVVKDGREEVIQAWYMDDSEEDQRLPHHKDPKEFLSLDKLAELGVLSWRLDADNYETDEDLKKIRESRGYSYMDFCEVCPEKLPNYEVKVKSFFEEHLHTDEEIRYCVAGSGYFDVRDRNEAWIRVWVKKGGMIVLPAGIYHRFTVDSDNYIKAMRLFVGEPVWTPYNRPHDHLPARKEYIDNFVKVNEGGVIDASA</sequence>